<keyword id="KW-0002">3D-structure</keyword>
<keyword id="KW-0456">Lyase</keyword>
<keyword id="KW-0474">Menaquinone biosynthesis</keyword>
<proteinExistence type="evidence at protein level"/>
<name>MENB_STAAC</name>
<comment type="function">
    <text evidence="2">Converts o-succinylbenzoyl-CoA (OSB-CoA) to 1,4-dihydroxy-2-naphthoyl-CoA (DHNA-CoA).</text>
</comment>
<comment type="catalytic activity">
    <reaction evidence="2 5">
        <text>2-succinylbenzoyl-CoA + H(+) = 1,4-dihydroxy-2-naphthoyl-CoA + H2O</text>
        <dbReference type="Rhea" id="RHEA:26562"/>
        <dbReference type="ChEBI" id="CHEBI:15377"/>
        <dbReference type="ChEBI" id="CHEBI:15378"/>
        <dbReference type="ChEBI" id="CHEBI:57364"/>
        <dbReference type="ChEBI" id="CHEBI:58897"/>
        <dbReference type="EC" id="4.1.3.36"/>
    </reaction>
</comment>
<comment type="cofactor">
    <cofactor evidence="2 5">
        <name>hydrogencarbonate</name>
        <dbReference type="ChEBI" id="CHEBI:17544"/>
    </cofactor>
    <text evidence="5">The hydrogencarbonate anion plays the same catalytic role (proton acceptor) as the side-chain carboxylate group of the essential 'Asp-185' found in actinobacteria, archaea, bacteroidetes, and deltaproteobacteria.</text>
</comment>
<comment type="pathway">
    <text evidence="2">Quinol/quinone metabolism; 1,4-dihydroxy-2-naphthoate biosynthesis; 1,4-dihydroxy-2-naphthoate from chorismate: step 6/7.</text>
</comment>
<comment type="pathway">
    <text evidence="2">Quinol/quinone metabolism; menaquinone biosynthesis.</text>
</comment>
<comment type="subunit">
    <text evidence="4">Homodimer. Can also form trimers and higher oligomers.</text>
</comment>
<comment type="similarity">
    <text evidence="2">Belongs to the enoyl-CoA hydratase/isomerase family. MenB subfamily.</text>
</comment>
<gene>
    <name evidence="2" type="primary">menB</name>
    <name type="ordered locus">SACOL1054</name>
</gene>
<feature type="chain" id="PRO_0000224814" description="1,4-dihydroxy-2-naphthoyl-CoA synthase">
    <location>
        <begin position="1"/>
        <end position="273"/>
    </location>
</feature>
<feature type="region of interest" description="Disordered" evidence="3">
    <location>
        <begin position="254"/>
        <end position="273"/>
    </location>
</feature>
<feature type="compositionally biased region" description="Basic and acidic residues" evidence="3">
    <location>
        <begin position="254"/>
        <end position="265"/>
    </location>
</feature>
<feature type="binding site" description="in other chain" evidence="2 4">
    <location>
        <position position="34"/>
    </location>
    <ligand>
        <name>substrate</name>
        <note>ligand shared between two neighboring subunits</note>
    </ligand>
</feature>
<feature type="binding site" description="in other chain" evidence="2 4">
    <location>
        <begin position="73"/>
        <end position="77"/>
    </location>
    <ligand>
        <name>substrate</name>
        <note>ligand shared between two neighboring subunits</note>
    </ligand>
</feature>
<feature type="binding site" description="in other chain" evidence="1 2">
    <location>
        <position position="85"/>
    </location>
    <ligand>
        <name>substrate</name>
        <note>ligand shared between two neighboring subunits</note>
    </ligand>
</feature>
<feature type="binding site" description="in other chain" evidence="1 2">
    <location>
        <begin position="117"/>
        <end position="121"/>
    </location>
    <ligand>
        <name>substrate</name>
        <note>ligand shared between two neighboring subunits</note>
    </ligand>
</feature>
<feature type="binding site" evidence="1 2">
    <location>
        <begin position="142"/>
        <end position="144"/>
    </location>
    <ligand>
        <name>hydrogencarbonate</name>
        <dbReference type="ChEBI" id="CHEBI:17544"/>
    </ligand>
</feature>
<feature type="binding site" description="in other chain" evidence="1 2">
    <location>
        <position position="143"/>
    </location>
    <ligand>
        <name>substrate</name>
        <note>ligand shared between two neighboring subunits</note>
    </ligand>
</feature>
<feature type="binding site" description="in other chain" evidence="2 4">
    <location>
        <position position="149"/>
    </location>
    <ligand>
        <name>substrate</name>
        <note>ligand shared between two neighboring subunits</note>
    </ligand>
</feature>
<feature type="binding site" evidence="1 2">
    <location>
        <position position="246"/>
    </location>
    <ligand>
        <name>substrate</name>
        <note>ligand shared between two neighboring subunits</note>
    </ligand>
</feature>
<feature type="binding site" evidence="1 2">
    <location>
        <position position="261"/>
    </location>
    <ligand>
        <name>substrate</name>
        <note>ligand shared between two neighboring subunits</note>
    </ligand>
</feature>
<feature type="site" description="Important for catalysis" evidence="1 2">
    <location>
        <position position="85"/>
    </location>
</feature>
<feature type="site" description="Important for catalysis" evidence="1 2">
    <location>
        <position position="246"/>
    </location>
</feature>
<feature type="strand" evidence="6">
    <location>
        <begin position="13"/>
        <end position="20"/>
    </location>
</feature>
<feature type="strand" evidence="6">
    <location>
        <begin position="23"/>
        <end position="28"/>
    </location>
</feature>
<feature type="helix" evidence="6">
    <location>
        <begin position="31"/>
        <end position="33"/>
    </location>
</feature>
<feature type="helix" evidence="6">
    <location>
        <begin position="39"/>
        <end position="54"/>
    </location>
</feature>
<feature type="strand" evidence="6">
    <location>
        <begin position="60"/>
        <end position="72"/>
    </location>
</feature>
<feature type="strand" evidence="6">
    <location>
        <begin position="89"/>
        <end position="91"/>
    </location>
</feature>
<feature type="helix" evidence="6">
    <location>
        <begin position="96"/>
        <end position="105"/>
    </location>
</feature>
<feature type="strand" evidence="6">
    <location>
        <begin position="106"/>
        <end position="108"/>
    </location>
</feature>
<feature type="strand" evidence="6">
    <location>
        <begin position="110"/>
        <end position="114"/>
    </location>
</feature>
<feature type="strand" evidence="6">
    <location>
        <begin position="116"/>
        <end position="119"/>
    </location>
</feature>
<feature type="helix" evidence="6">
    <location>
        <begin position="121"/>
        <end position="128"/>
    </location>
</feature>
<feature type="strand" evidence="6">
    <location>
        <begin position="129"/>
        <end position="135"/>
    </location>
</feature>
<feature type="strand" evidence="6">
    <location>
        <begin position="139"/>
        <end position="141"/>
    </location>
</feature>
<feature type="helix" evidence="6">
    <location>
        <begin position="144"/>
        <end position="146"/>
    </location>
</feature>
<feature type="turn" evidence="6">
    <location>
        <begin position="154"/>
        <end position="156"/>
    </location>
</feature>
<feature type="helix" evidence="6">
    <location>
        <begin position="157"/>
        <end position="163"/>
    </location>
</feature>
<feature type="helix" evidence="6">
    <location>
        <begin position="165"/>
        <end position="173"/>
    </location>
</feature>
<feature type="helix" evidence="6">
    <location>
        <begin position="180"/>
        <end position="185"/>
    </location>
</feature>
<feature type="strand" evidence="6">
    <location>
        <begin position="188"/>
        <end position="193"/>
    </location>
</feature>
<feature type="helix" evidence="6">
    <location>
        <begin position="195"/>
        <end position="197"/>
    </location>
</feature>
<feature type="helix" evidence="6">
    <location>
        <begin position="199"/>
        <end position="209"/>
    </location>
</feature>
<feature type="helix" evidence="6">
    <location>
        <begin position="214"/>
        <end position="228"/>
    </location>
</feature>
<feature type="helix" evidence="6">
    <location>
        <begin position="230"/>
        <end position="246"/>
    </location>
</feature>
<feature type="helix" evidence="6">
    <location>
        <begin position="249"/>
        <end position="259"/>
    </location>
</feature>
<feature type="strand" evidence="6">
    <location>
        <begin position="267"/>
        <end position="269"/>
    </location>
</feature>
<organism>
    <name type="scientific">Staphylococcus aureus (strain COL)</name>
    <dbReference type="NCBI Taxonomy" id="93062"/>
    <lineage>
        <taxon>Bacteria</taxon>
        <taxon>Bacillati</taxon>
        <taxon>Bacillota</taxon>
        <taxon>Bacilli</taxon>
        <taxon>Bacillales</taxon>
        <taxon>Staphylococcaceae</taxon>
        <taxon>Staphylococcus</taxon>
    </lineage>
</organism>
<protein>
    <recommendedName>
        <fullName evidence="2">1,4-dihydroxy-2-naphthoyl-CoA synthase</fullName>
        <shortName evidence="2">DHNA-CoA synthase</shortName>
        <ecNumber evidence="2">4.1.3.36</ecNumber>
    </recommendedName>
</protein>
<accession>Q5HH38</accession>
<sequence length="273" mass="30426">MTNRQWETLREYDEIKYEFYEGIAKVTINRPEVRNAFTPKTVAEMIDAFSRARDDQNVSVIVLTGEGDLAFCSGGDQKKRGHGGYVGEDQIPRLNVLDLQRLIRIIPKPVIAMVKGYAVGGGNVLNVVCDLTIAADNAIFGQTGPKVGSFDAGYGSGYLARIVGHKKAREIWYLCRQYNAQEALDMGLVNTVVPLEKVEDETVQWCKEIMKHSPTALRFLKAAMNADTDGLAGLQQMAGDATLLYYTTDEAKEGRDAFKEKRDPDFDQFPKFP</sequence>
<reference key="1">
    <citation type="journal article" date="2005" name="J. Bacteriol.">
        <title>Insights on evolution of virulence and resistance from the complete genome analysis of an early methicillin-resistant Staphylococcus aureus strain and a biofilm-producing methicillin-resistant Staphylococcus epidermidis strain.</title>
        <authorList>
            <person name="Gill S.R."/>
            <person name="Fouts D.E."/>
            <person name="Archer G.L."/>
            <person name="Mongodin E.F."/>
            <person name="DeBoy R.T."/>
            <person name="Ravel J."/>
            <person name="Paulsen I.T."/>
            <person name="Kolonay J.F."/>
            <person name="Brinkac L.M."/>
            <person name="Beanan M.J."/>
            <person name="Dodson R.J."/>
            <person name="Daugherty S.C."/>
            <person name="Madupu R."/>
            <person name="Angiuoli S.V."/>
            <person name="Durkin A.S."/>
            <person name="Haft D.H."/>
            <person name="Vamathevan J.J."/>
            <person name="Khouri H."/>
            <person name="Utterback T.R."/>
            <person name="Lee C."/>
            <person name="Dimitrov G."/>
            <person name="Jiang L."/>
            <person name="Qin H."/>
            <person name="Weidman J."/>
            <person name="Tran K."/>
            <person name="Kang K.H."/>
            <person name="Hance I.R."/>
            <person name="Nelson K.E."/>
            <person name="Fraser C.M."/>
        </authorList>
    </citation>
    <scope>NUCLEOTIDE SEQUENCE [LARGE SCALE GENOMIC DNA]</scope>
    <source>
        <strain>COL</strain>
    </source>
</reference>
<reference key="2">
    <citation type="journal article" date="2010" name="J. Biol. Chem.">
        <title>A bicarbonate cofactor modulates 1,4-dihydroxy-2-naphthoyl-coenzyme a synthase in menaquinone biosynthesis of Escherichia coli.</title>
        <authorList>
            <person name="Jiang M."/>
            <person name="Chen M."/>
            <person name="Guo Z.F."/>
            <person name="Guo Z."/>
        </authorList>
    </citation>
    <scope>CATALYTIC ACTIVITY</scope>
    <scope>COFACTOR</scope>
</reference>
<reference key="3">
    <citation type="journal article" date="2007" name="Acta Crystallogr. F">
        <title>Structure of Staphylococcus aureus1,4-dihydroxy-2-naphthoyl-CoA synthase (MenB) in complex with acetoacetyl-CoA.</title>
        <authorList>
            <person name="Ulaganathan V."/>
            <person name="Agacan M.F."/>
            <person name="Buetow L."/>
            <person name="Tulloch L.B."/>
            <person name="Hunter W.N."/>
        </authorList>
    </citation>
    <scope>X-RAY CRYSTALLOGRAPHY (2.9 ANGSTROMS) IN COMPLEX WITH THE SUBSTRATE ANALOG ACETOACETYL-COA</scope>
    <scope>SUBUNIT</scope>
</reference>
<evidence type="ECO:0000250" key="1">
    <source>
        <dbReference type="UniProtKB" id="P0ABU0"/>
    </source>
</evidence>
<evidence type="ECO:0000255" key="2">
    <source>
        <dbReference type="HAMAP-Rule" id="MF_01934"/>
    </source>
</evidence>
<evidence type="ECO:0000256" key="3">
    <source>
        <dbReference type="SAM" id="MobiDB-lite"/>
    </source>
</evidence>
<evidence type="ECO:0000269" key="4">
    <source>
    </source>
</evidence>
<evidence type="ECO:0000269" key="5">
    <source>
    </source>
</evidence>
<evidence type="ECO:0007829" key="6">
    <source>
        <dbReference type="PDB" id="2UZF"/>
    </source>
</evidence>
<dbReference type="EC" id="4.1.3.36" evidence="2"/>
<dbReference type="EMBL" id="CP000046">
    <property type="protein sequence ID" value="AAW36519.1"/>
    <property type="molecule type" value="Genomic_DNA"/>
</dbReference>
<dbReference type="RefSeq" id="WP_000184947.1">
    <property type="nucleotide sequence ID" value="NZ_JBGOFO010000002.1"/>
</dbReference>
<dbReference type="PDB" id="2UZF">
    <property type="method" value="X-ray"/>
    <property type="resolution" value="2.90 A"/>
    <property type="chains" value="A/B=1-273"/>
</dbReference>
<dbReference type="PDBsum" id="2UZF"/>
<dbReference type="SMR" id="Q5HH38"/>
<dbReference type="KEGG" id="sac:SACOL1054"/>
<dbReference type="HOGENOM" id="CLU_009834_7_7_9"/>
<dbReference type="BRENDA" id="4.1.3.36">
    <property type="organism ID" value="3352"/>
</dbReference>
<dbReference type="UniPathway" id="UPA00079"/>
<dbReference type="UniPathway" id="UPA01057">
    <property type="reaction ID" value="UER00167"/>
</dbReference>
<dbReference type="EvolutionaryTrace" id="Q5HH38"/>
<dbReference type="Proteomes" id="UP000000530">
    <property type="component" value="Chromosome"/>
</dbReference>
<dbReference type="GO" id="GO:0005829">
    <property type="term" value="C:cytosol"/>
    <property type="evidence" value="ECO:0007669"/>
    <property type="project" value="TreeGrafter"/>
</dbReference>
<dbReference type="GO" id="GO:0008935">
    <property type="term" value="F:1,4-dihydroxy-2-naphthoyl-CoA synthase activity"/>
    <property type="evidence" value="ECO:0007669"/>
    <property type="project" value="UniProtKB-UniRule"/>
</dbReference>
<dbReference type="GO" id="GO:0009234">
    <property type="term" value="P:menaquinone biosynthetic process"/>
    <property type="evidence" value="ECO:0007669"/>
    <property type="project" value="UniProtKB-UniRule"/>
</dbReference>
<dbReference type="CDD" id="cd06558">
    <property type="entry name" value="crotonase-like"/>
    <property type="match status" value="1"/>
</dbReference>
<dbReference type="FunFam" id="1.10.12.10:FF:000003">
    <property type="entry name" value="1,4-dihydroxy-2-naphthoyl-CoA synthase"/>
    <property type="match status" value="1"/>
</dbReference>
<dbReference type="FunFam" id="3.90.226.10:FF:000003">
    <property type="entry name" value="1,4-dihydroxy-2-naphthoyl-CoA synthase"/>
    <property type="match status" value="1"/>
</dbReference>
<dbReference type="Gene3D" id="3.90.226.10">
    <property type="entry name" value="2-enoyl-CoA Hydratase, Chain A, domain 1"/>
    <property type="match status" value="1"/>
</dbReference>
<dbReference type="Gene3D" id="1.10.12.10">
    <property type="entry name" value="Lyase 2-enoyl-coa Hydratase, Chain A, domain 2"/>
    <property type="match status" value="1"/>
</dbReference>
<dbReference type="HAMAP" id="MF_01934">
    <property type="entry name" value="MenB"/>
    <property type="match status" value="1"/>
</dbReference>
<dbReference type="InterPro" id="IPR029045">
    <property type="entry name" value="ClpP/crotonase-like_dom_sf"/>
</dbReference>
<dbReference type="InterPro" id="IPR010198">
    <property type="entry name" value="DHNA-CoA_synthase_MenB"/>
</dbReference>
<dbReference type="InterPro" id="IPR001753">
    <property type="entry name" value="Enoyl-CoA_hydra/iso"/>
</dbReference>
<dbReference type="InterPro" id="IPR014748">
    <property type="entry name" value="Enoyl-CoA_hydra_C"/>
</dbReference>
<dbReference type="NCBIfam" id="TIGR01929">
    <property type="entry name" value="menB"/>
    <property type="match status" value="1"/>
</dbReference>
<dbReference type="NCBIfam" id="NF005637">
    <property type="entry name" value="PRK07396.1"/>
    <property type="match status" value="1"/>
</dbReference>
<dbReference type="PANTHER" id="PTHR43113:SF1">
    <property type="entry name" value="1,4-DIHYDROXY-2-NAPHTHOYL-COA SYNTHASE, PEROXISOMAL"/>
    <property type="match status" value="1"/>
</dbReference>
<dbReference type="PANTHER" id="PTHR43113">
    <property type="entry name" value="NUCLEOSIDE-DIPHOSPHATE-SUGAR EPIMERASE"/>
    <property type="match status" value="1"/>
</dbReference>
<dbReference type="Pfam" id="PF00378">
    <property type="entry name" value="ECH_1"/>
    <property type="match status" value="1"/>
</dbReference>
<dbReference type="SUPFAM" id="SSF52096">
    <property type="entry name" value="ClpP/crotonase"/>
    <property type="match status" value="1"/>
</dbReference>